<reference key="1">
    <citation type="journal article" date="2000" name="Nature">
        <title>Sequence and analysis of chromosome 1 of the plant Arabidopsis thaliana.</title>
        <authorList>
            <person name="Theologis A."/>
            <person name="Ecker J.R."/>
            <person name="Palm C.J."/>
            <person name="Federspiel N.A."/>
            <person name="Kaul S."/>
            <person name="White O."/>
            <person name="Alonso J."/>
            <person name="Altafi H."/>
            <person name="Araujo R."/>
            <person name="Bowman C.L."/>
            <person name="Brooks S.Y."/>
            <person name="Buehler E."/>
            <person name="Chan A."/>
            <person name="Chao Q."/>
            <person name="Chen H."/>
            <person name="Cheuk R.F."/>
            <person name="Chin C.W."/>
            <person name="Chung M.K."/>
            <person name="Conn L."/>
            <person name="Conway A.B."/>
            <person name="Conway A.R."/>
            <person name="Creasy T.H."/>
            <person name="Dewar K."/>
            <person name="Dunn P."/>
            <person name="Etgu P."/>
            <person name="Feldblyum T.V."/>
            <person name="Feng J.-D."/>
            <person name="Fong B."/>
            <person name="Fujii C.Y."/>
            <person name="Gill J.E."/>
            <person name="Goldsmith A.D."/>
            <person name="Haas B."/>
            <person name="Hansen N.F."/>
            <person name="Hughes B."/>
            <person name="Huizar L."/>
            <person name="Hunter J.L."/>
            <person name="Jenkins J."/>
            <person name="Johnson-Hopson C."/>
            <person name="Khan S."/>
            <person name="Khaykin E."/>
            <person name="Kim C.J."/>
            <person name="Koo H.L."/>
            <person name="Kremenetskaia I."/>
            <person name="Kurtz D.B."/>
            <person name="Kwan A."/>
            <person name="Lam B."/>
            <person name="Langin-Hooper S."/>
            <person name="Lee A."/>
            <person name="Lee J.M."/>
            <person name="Lenz C.A."/>
            <person name="Li J.H."/>
            <person name="Li Y.-P."/>
            <person name="Lin X."/>
            <person name="Liu S.X."/>
            <person name="Liu Z.A."/>
            <person name="Luros J.S."/>
            <person name="Maiti R."/>
            <person name="Marziali A."/>
            <person name="Militscher J."/>
            <person name="Miranda M."/>
            <person name="Nguyen M."/>
            <person name="Nierman W.C."/>
            <person name="Osborne B.I."/>
            <person name="Pai G."/>
            <person name="Peterson J."/>
            <person name="Pham P.K."/>
            <person name="Rizzo M."/>
            <person name="Rooney T."/>
            <person name="Rowley D."/>
            <person name="Sakano H."/>
            <person name="Salzberg S.L."/>
            <person name="Schwartz J.R."/>
            <person name="Shinn P."/>
            <person name="Southwick A.M."/>
            <person name="Sun H."/>
            <person name="Tallon L.J."/>
            <person name="Tambunga G."/>
            <person name="Toriumi M.J."/>
            <person name="Town C.D."/>
            <person name="Utterback T."/>
            <person name="Van Aken S."/>
            <person name="Vaysberg M."/>
            <person name="Vysotskaia V.S."/>
            <person name="Walker M."/>
            <person name="Wu D."/>
            <person name="Yu G."/>
            <person name="Fraser C.M."/>
            <person name="Venter J.C."/>
            <person name="Davis R.W."/>
        </authorList>
    </citation>
    <scope>NUCLEOTIDE SEQUENCE [LARGE SCALE GENOMIC DNA]</scope>
    <source>
        <strain>cv. Columbia</strain>
    </source>
</reference>
<reference key="2">
    <citation type="journal article" date="2017" name="Plant J.">
        <title>Araport11: a complete reannotation of the Arabidopsis thaliana reference genome.</title>
        <authorList>
            <person name="Cheng C.Y."/>
            <person name="Krishnakumar V."/>
            <person name="Chan A.P."/>
            <person name="Thibaud-Nissen F."/>
            <person name="Schobel S."/>
            <person name="Town C.D."/>
        </authorList>
    </citation>
    <scope>GENOME REANNOTATION</scope>
    <source>
        <strain>cv. Columbia</strain>
    </source>
</reference>
<reference key="3">
    <citation type="journal article" date="2002" name="Science">
        <title>Functional annotation of a full-length Arabidopsis cDNA collection.</title>
        <authorList>
            <person name="Seki M."/>
            <person name="Narusaka M."/>
            <person name="Kamiya A."/>
            <person name="Ishida J."/>
            <person name="Satou M."/>
            <person name="Sakurai T."/>
            <person name="Nakajima M."/>
            <person name="Enju A."/>
            <person name="Akiyama K."/>
            <person name="Oono Y."/>
            <person name="Muramatsu M."/>
            <person name="Hayashizaki Y."/>
            <person name="Kawai J."/>
            <person name="Carninci P."/>
            <person name="Itoh M."/>
            <person name="Ishii Y."/>
            <person name="Arakawa T."/>
            <person name="Shibata K."/>
            <person name="Shinagawa A."/>
            <person name="Shinozaki K."/>
        </authorList>
    </citation>
    <scope>NUCLEOTIDE SEQUENCE [LARGE SCALE MRNA] (ISOFORM 1)</scope>
    <source>
        <strain>cv. Columbia</strain>
    </source>
</reference>
<reference key="4">
    <citation type="journal article" date="2003" name="Science">
        <title>Empirical analysis of transcriptional activity in the Arabidopsis genome.</title>
        <authorList>
            <person name="Yamada K."/>
            <person name="Lim J."/>
            <person name="Dale J.M."/>
            <person name="Chen H."/>
            <person name="Shinn P."/>
            <person name="Palm C.J."/>
            <person name="Southwick A.M."/>
            <person name="Wu H.C."/>
            <person name="Kim C.J."/>
            <person name="Nguyen M."/>
            <person name="Pham P.K."/>
            <person name="Cheuk R.F."/>
            <person name="Karlin-Newmann G."/>
            <person name="Liu S.X."/>
            <person name="Lam B."/>
            <person name="Sakano H."/>
            <person name="Wu T."/>
            <person name="Yu G."/>
            <person name="Miranda M."/>
            <person name="Quach H.L."/>
            <person name="Tripp M."/>
            <person name="Chang C.H."/>
            <person name="Lee J.M."/>
            <person name="Toriumi M.J."/>
            <person name="Chan M.M."/>
            <person name="Tang C.C."/>
            <person name="Onodera C.S."/>
            <person name="Deng J.M."/>
            <person name="Akiyama K."/>
            <person name="Ansari Y."/>
            <person name="Arakawa T."/>
            <person name="Banh J."/>
            <person name="Banno F."/>
            <person name="Bowser L."/>
            <person name="Brooks S.Y."/>
            <person name="Carninci P."/>
            <person name="Chao Q."/>
            <person name="Choy N."/>
            <person name="Enju A."/>
            <person name="Goldsmith A.D."/>
            <person name="Gurjal M."/>
            <person name="Hansen N.F."/>
            <person name="Hayashizaki Y."/>
            <person name="Johnson-Hopson C."/>
            <person name="Hsuan V.W."/>
            <person name="Iida K."/>
            <person name="Karnes M."/>
            <person name="Khan S."/>
            <person name="Koesema E."/>
            <person name="Ishida J."/>
            <person name="Jiang P.X."/>
            <person name="Jones T."/>
            <person name="Kawai J."/>
            <person name="Kamiya A."/>
            <person name="Meyers C."/>
            <person name="Nakajima M."/>
            <person name="Narusaka M."/>
            <person name="Seki M."/>
            <person name="Sakurai T."/>
            <person name="Satou M."/>
            <person name="Tamse R."/>
            <person name="Vaysberg M."/>
            <person name="Wallender E.K."/>
            <person name="Wong C."/>
            <person name="Yamamura Y."/>
            <person name="Yuan S."/>
            <person name="Shinozaki K."/>
            <person name="Davis R.W."/>
            <person name="Theologis A."/>
            <person name="Ecker J.R."/>
        </authorList>
    </citation>
    <scope>NUCLEOTIDE SEQUENCE [LARGE SCALE MRNA] (ISOFORM 1)</scope>
    <source>
        <strain>cv. Columbia</strain>
    </source>
</reference>
<reference key="5">
    <citation type="journal article" date="2009" name="DNA Res.">
        <title>Analysis of multiple occurrences of alternative splicing events in Arabidopsis thaliana using novel sequenced full-length cDNAs.</title>
        <authorList>
            <person name="Iida K."/>
            <person name="Fukami-Kobayashi K."/>
            <person name="Toyoda A."/>
            <person name="Sakaki Y."/>
            <person name="Kobayashi M."/>
            <person name="Seki M."/>
            <person name="Shinozaki K."/>
        </authorList>
    </citation>
    <scope>NUCLEOTIDE SEQUENCE [LARGE SCALE MRNA] (ISOFORM 2)</scope>
    <source>
        <strain>cv. Columbia</strain>
        <tissue>Flower</tissue>
        <tissue>Silique</tissue>
    </source>
</reference>
<reference key="6">
    <citation type="submission" date="2005-03" db="EMBL/GenBank/DDBJ databases">
        <title>Large-scale analysis of RIKEN Arabidopsis full-length (RAFL) cDNAs.</title>
        <authorList>
            <person name="Totoki Y."/>
            <person name="Seki M."/>
            <person name="Ishida J."/>
            <person name="Nakajima M."/>
            <person name="Enju A."/>
            <person name="Kamiya A."/>
            <person name="Narusaka M."/>
            <person name="Shin-i T."/>
            <person name="Nakagawa M."/>
            <person name="Sakamoto N."/>
            <person name="Oishi K."/>
            <person name="Kohara Y."/>
            <person name="Kobayashi M."/>
            <person name="Toyoda A."/>
            <person name="Sakaki Y."/>
            <person name="Sakurai T."/>
            <person name="Iida K."/>
            <person name="Akiyama K."/>
            <person name="Satou M."/>
            <person name="Toyoda T."/>
            <person name="Konagaya A."/>
            <person name="Carninci P."/>
            <person name="Kawai J."/>
            <person name="Hayashizaki Y."/>
            <person name="Shinozaki K."/>
        </authorList>
    </citation>
    <scope>NUCLEOTIDE SEQUENCE [LARGE SCALE MRNA] OF 239-399 (ISOFORM 1/2)</scope>
    <source>
        <strain>cv. Columbia</strain>
    </source>
</reference>
<reference key="7">
    <citation type="journal article" date="2009" name="Protein Expr. Purif.">
        <title>Biochemical characterization of Arabidopsis developmentally regulated G-proteins (DRGs).</title>
        <authorList>
            <person name="O'Connell A."/>
            <person name="Robin G."/>
            <person name="Kobe B."/>
            <person name="Botella J.R."/>
        </authorList>
    </citation>
    <scope>FUNCTION</scope>
</reference>
<gene>
    <name type="primary">DRG2</name>
    <name type="synonym">DRG2B</name>
    <name type="ordered locus">At1g72660</name>
    <name type="ORF">F28P22.15</name>
</gene>
<organism>
    <name type="scientific">Arabidopsis thaliana</name>
    <name type="common">Mouse-ear cress</name>
    <dbReference type="NCBI Taxonomy" id="3702"/>
    <lineage>
        <taxon>Eukaryota</taxon>
        <taxon>Viridiplantae</taxon>
        <taxon>Streptophyta</taxon>
        <taxon>Embryophyta</taxon>
        <taxon>Tracheophyta</taxon>
        <taxon>Spermatophyta</taxon>
        <taxon>Magnoliopsida</taxon>
        <taxon>eudicotyledons</taxon>
        <taxon>Gunneridae</taxon>
        <taxon>Pentapetalae</taxon>
        <taxon>rosids</taxon>
        <taxon>malvids</taxon>
        <taxon>Brassicales</taxon>
        <taxon>Brassicaceae</taxon>
        <taxon>Camelineae</taxon>
        <taxon>Arabidopsis</taxon>
    </lineage>
</organism>
<proteinExistence type="evidence at transcript level"/>
<feature type="chain" id="PRO_0000412609" description="Developmentally-regulated G-protein 2">
    <location>
        <begin position="1"/>
        <end position="399"/>
    </location>
</feature>
<feature type="domain" description="OBG-type G" evidence="2">
    <location>
        <begin position="63"/>
        <end position="288"/>
    </location>
</feature>
<feature type="domain" description="TGS" evidence="3">
    <location>
        <begin position="288"/>
        <end position="366"/>
    </location>
</feature>
<feature type="region of interest" description="Disordered" evidence="4">
    <location>
        <begin position="372"/>
        <end position="399"/>
    </location>
</feature>
<feature type="compositionally biased region" description="Basic and acidic residues" evidence="4">
    <location>
        <begin position="388"/>
        <end position="399"/>
    </location>
</feature>
<feature type="binding site" evidence="2">
    <location>
        <begin position="69"/>
        <end position="76"/>
    </location>
    <ligand>
        <name>GTP</name>
        <dbReference type="ChEBI" id="CHEBI:37565"/>
    </ligand>
</feature>
<feature type="binding site" evidence="2">
    <location>
        <begin position="115"/>
        <end position="119"/>
    </location>
    <ligand>
        <name>GTP</name>
        <dbReference type="ChEBI" id="CHEBI:37565"/>
    </ligand>
</feature>
<feature type="binding site" evidence="2">
    <location>
        <begin position="246"/>
        <end position="249"/>
    </location>
    <ligand>
        <name>GTP</name>
        <dbReference type="ChEBI" id="CHEBI:37565"/>
    </ligand>
</feature>
<feature type="splice variant" id="VSP_041722" description="In isoform 2." evidence="6">
    <location>
        <begin position="1"/>
        <end position="144"/>
    </location>
</feature>
<feature type="sequence conflict" description="In Ref. 6; BAD95228." evidence="7" ref="6">
    <original>P</original>
    <variation>R</variation>
    <location>
        <position position="296"/>
    </location>
</feature>
<feature type="sequence conflict" description="In Ref. 6; BAD95228." evidence="7" ref="6">
    <original>D</original>
    <variation>G</variation>
    <location>
        <position position="304"/>
    </location>
</feature>
<evidence type="ECO:0000250" key="1"/>
<evidence type="ECO:0000255" key="2">
    <source>
        <dbReference type="PROSITE-ProRule" id="PRU01047"/>
    </source>
</evidence>
<evidence type="ECO:0000255" key="3">
    <source>
        <dbReference type="PROSITE-ProRule" id="PRU01228"/>
    </source>
</evidence>
<evidence type="ECO:0000256" key="4">
    <source>
        <dbReference type="SAM" id="MobiDB-lite"/>
    </source>
</evidence>
<evidence type="ECO:0000269" key="5">
    <source>
    </source>
</evidence>
<evidence type="ECO:0000303" key="6">
    <source>
    </source>
</evidence>
<evidence type="ECO:0000305" key="7"/>
<dbReference type="EMBL" id="AC010926">
    <property type="protein sequence ID" value="AAG51856.1"/>
    <property type="molecule type" value="Genomic_DNA"/>
</dbReference>
<dbReference type="EMBL" id="CP002684">
    <property type="protein sequence ID" value="AEE35356.1"/>
    <property type="molecule type" value="Genomic_DNA"/>
</dbReference>
<dbReference type="EMBL" id="CP002684">
    <property type="protein sequence ID" value="AEE35357.1"/>
    <property type="molecule type" value="Genomic_DNA"/>
</dbReference>
<dbReference type="EMBL" id="CP002684">
    <property type="protein sequence ID" value="AEE35358.1"/>
    <property type="molecule type" value="Genomic_DNA"/>
</dbReference>
<dbReference type="EMBL" id="AK118905">
    <property type="protein sequence ID" value="BAC43489.1"/>
    <property type="molecule type" value="mRNA"/>
</dbReference>
<dbReference type="EMBL" id="BT006031">
    <property type="protein sequence ID" value="AAP04018.1"/>
    <property type="molecule type" value="mRNA"/>
</dbReference>
<dbReference type="EMBL" id="AK319004">
    <property type="protein sequence ID" value="BAH57119.1"/>
    <property type="molecule type" value="mRNA"/>
</dbReference>
<dbReference type="EMBL" id="AK221170">
    <property type="protein sequence ID" value="BAD95228.1"/>
    <property type="molecule type" value="mRNA"/>
</dbReference>
<dbReference type="PIR" id="C96751">
    <property type="entry name" value="C96751"/>
</dbReference>
<dbReference type="RefSeq" id="NP_001031270.1">
    <molecule id="Q9CAI1-1"/>
    <property type="nucleotide sequence ID" value="NM_001036193.2"/>
</dbReference>
<dbReference type="RefSeq" id="NP_001031271.1">
    <molecule id="Q9CAI1-1"/>
    <property type="nucleotide sequence ID" value="NM_001036194.1"/>
</dbReference>
<dbReference type="RefSeq" id="NP_177410.1">
    <molecule id="Q9CAI1-1"/>
    <property type="nucleotide sequence ID" value="NM_105925.4"/>
</dbReference>
<dbReference type="SMR" id="Q9CAI1"/>
<dbReference type="BioGRID" id="28817">
    <property type="interactions" value="1"/>
</dbReference>
<dbReference type="FunCoup" id="Q9CAI1">
    <property type="interactions" value="4351"/>
</dbReference>
<dbReference type="STRING" id="3702.Q9CAI1"/>
<dbReference type="PaxDb" id="3702-AT1G72660.2"/>
<dbReference type="ProteomicsDB" id="224302">
    <molecule id="Q9CAI1-1"/>
</dbReference>
<dbReference type="EnsemblPlants" id="AT1G72660.1">
    <molecule id="Q9CAI1-1"/>
    <property type="protein sequence ID" value="AT1G72660.1"/>
    <property type="gene ID" value="AT1G72660"/>
</dbReference>
<dbReference type="EnsemblPlants" id="AT1G72660.2">
    <molecule id="Q9CAI1-1"/>
    <property type="protein sequence ID" value="AT1G72660.2"/>
    <property type="gene ID" value="AT1G72660"/>
</dbReference>
<dbReference type="EnsemblPlants" id="AT1G72660.3">
    <molecule id="Q9CAI1-1"/>
    <property type="protein sequence ID" value="AT1G72660.3"/>
    <property type="gene ID" value="AT1G72660"/>
</dbReference>
<dbReference type="GeneID" id="843598"/>
<dbReference type="Gramene" id="AT1G72660.1">
    <molecule id="Q9CAI1-1"/>
    <property type="protein sequence ID" value="AT1G72660.1"/>
    <property type="gene ID" value="AT1G72660"/>
</dbReference>
<dbReference type="Gramene" id="AT1G72660.2">
    <molecule id="Q9CAI1-1"/>
    <property type="protein sequence ID" value="AT1G72660.2"/>
    <property type="gene ID" value="AT1G72660"/>
</dbReference>
<dbReference type="Gramene" id="AT1G72660.3">
    <molecule id="Q9CAI1-1"/>
    <property type="protein sequence ID" value="AT1G72660.3"/>
    <property type="gene ID" value="AT1G72660"/>
</dbReference>
<dbReference type="KEGG" id="ath:AT1G72660"/>
<dbReference type="Araport" id="AT1G72660"/>
<dbReference type="TAIR" id="AT1G72660">
    <property type="gene designation" value="DRG1-3"/>
</dbReference>
<dbReference type="eggNOG" id="KOG1486">
    <property type="taxonomic scope" value="Eukaryota"/>
</dbReference>
<dbReference type="HOGENOM" id="CLU_044997_0_0_1"/>
<dbReference type="InParanoid" id="Q9CAI1"/>
<dbReference type="OMA" id="DVCDQVH"/>
<dbReference type="PhylomeDB" id="Q9CAI1"/>
<dbReference type="CD-CODE" id="4299E36E">
    <property type="entry name" value="Nucleolus"/>
</dbReference>
<dbReference type="PRO" id="PR:Q9CAI1"/>
<dbReference type="Proteomes" id="UP000006548">
    <property type="component" value="Chromosome 1"/>
</dbReference>
<dbReference type="ExpressionAtlas" id="Q9CAI1">
    <property type="expression patterns" value="baseline and differential"/>
</dbReference>
<dbReference type="GO" id="GO:0005739">
    <property type="term" value="C:mitochondrion"/>
    <property type="evidence" value="ECO:0007005"/>
    <property type="project" value="TAIR"/>
</dbReference>
<dbReference type="GO" id="GO:0019003">
    <property type="term" value="F:GDP binding"/>
    <property type="evidence" value="ECO:0000314"/>
    <property type="project" value="UniProtKB"/>
</dbReference>
<dbReference type="GO" id="GO:0005525">
    <property type="term" value="F:GTP binding"/>
    <property type="evidence" value="ECO:0000314"/>
    <property type="project" value="UniProtKB"/>
</dbReference>
<dbReference type="GO" id="GO:0003924">
    <property type="term" value="F:GTPase activity"/>
    <property type="evidence" value="ECO:0000314"/>
    <property type="project" value="UniProtKB"/>
</dbReference>
<dbReference type="GO" id="GO:0003729">
    <property type="term" value="F:mRNA binding"/>
    <property type="evidence" value="ECO:0000314"/>
    <property type="project" value="TAIR"/>
</dbReference>
<dbReference type="CDD" id="cd01896">
    <property type="entry name" value="DRG"/>
    <property type="match status" value="1"/>
</dbReference>
<dbReference type="CDD" id="cd17230">
    <property type="entry name" value="TGS_DRG1"/>
    <property type="match status" value="1"/>
</dbReference>
<dbReference type="FunFam" id="3.10.20.30:FF:000003">
    <property type="entry name" value="Developmentally-regulated GTP-binding protein 1"/>
    <property type="match status" value="1"/>
</dbReference>
<dbReference type="FunFam" id="3.40.50.300:FF:000740">
    <property type="entry name" value="Putative GTP-binding protein 1"/>
    <property type="match status" value="1"/>
</dbReference>
<dbReference type="Gene3D" id="3.10.20.30">
    <property type="match status" value="1"/>
</dbReference>
<dbReference type="Gene3D" id="6.10.140.1070">
    <property type="match status" value="2"/>
</dbReference>
<dbReference type="InterPro" id="IPR012675">
    <property type="entry name" value="Beta-grasp_dom_sf"/>
</dbReference>
<dbReference type="InterPro" id="IPR045001">
    <property type="entry name" value="DRG"/>
</dbReference>
<dbReference type="InterPro" id="IPR031167">
    <property type="entry name" value="G_OBG"/>
</dbReference>
<dbReference type="InterPro" id="IPR006073">
    <property type="entry name" value="GTP-bd"/>
</dbReference>
<dbReference type="InterPro" id="IPR031662">
    <property type="entry name" value="GTP-binding_2"/>
</dbReference>
<dbReference type="InterPro" id="IPR006074">
    <property type="entry name" value="GTP1-OBG_CS"/>
</dbReference>
<dbReference type="InterPro" id="IPR027417">
    <property type="entry name" value="P-loop_NTPase"/>
</dbReference>
<dbReference type="InterPro" id="IPR005225">
    <property type="entry name" value="Small_GTP-bd"/>
</dbReference>
<dbReference type="InterPro" id="IPR004095">
    <property type="entry name" value="TGS"/>
</dbReference>
<dbReference type="InterPro" id="IPR012676">
    <property type="entry name" value="TGS-like"/>
</dbReference>
<dbReference type="NCBIfam" id="TIGR00231">
    <property type="entry name" value="small_GTP"/>
    <property type="match status" value="1"/>
</dbReference>
<dbReference type="PANTHER" id="PTHR43127">
    <property type="entry name" value="DEVELOPMENTALLY-REGULATED GTP-BINDING PROTEIN 2"/>
    <property type="match status" value="1"/>
</dbReference>
<dbReference type="Pfam" id="PF01926">
    <property type="entry name" value="MMR_HSR1"/>
    <property type="match status" value="1"/>
</dbReference>
<dbReference type="Pfam" id="PF16897">
    <property type="entry name" value="MMR_HSR1_Xtn"/>
    <property type="match status" value="1"/>
</dbReference>
<dbReference type="Pfam" id="PF02824">
    <property type="entry name" value="TGS"/>
    <property type="match status" value="1"/>
</dbReference>
<dbReference type="PRINTS" id="PR00326">
    <property type="entry name" value="GTP1OBG"/>
</dbReference>
<dbReference type="SUPFAM" id="SSF52540">
    <property type="entry name" value="P-loop containing nucleoside triphosphate hydrolases"/>
    <property type="match status" value="1"/>
</dbReference>
<dbReference type="SUPFAM" id="SSF81271">
    <property type="entry name" value="TGS-like"/>
    <property type="match status" value="1"/>
</dbReference>
<dbReference type="PROSITE" id="PS51710">
    <property type="entry name" value="G_OBG"/>
    <property type="match status" value="1"/>
</dbReference>
<dbReference type="PROSITE" id="PS00905">
    <property type="entry name" value="GTP1_OBG"/>
    <property type="match status" value="1"/>
</dbReference>
<dbReference type="PROSITE" id="PS51880">
    <property type="entry name" value="TGS"/>
    <property type="match status" value="1"/>
</dbReference>
<name>DRG2_ARATH</name>
<sequence length="399" mass="44803">MGIVERIKEIEAEMARTQKNKATEYHLGQLKAKIAKLRTQLLEPPKGSSGGGDGFEVTKYGHGRVALIGFPSVGKSTLLTMLTGTHSEAASYEFTTLTCIPGVIHYNDTKIQLLDLPGIIEGASEGKGRGRQVIAVAKSSDLVLMVLDASKSEGHRQILTKELEAVGLRLNKRPPQIYFKKKKTGGISFNTTTPLTRIDEKLCYQILHEYKIHNAEVLFREDATVDDFIDVVEGNRKYIKCVYVYNKIDVVGIDDVDRLARQPNSIVISCNLKLNLDRLLARMWDEMGLVRVYSKPQSQQPDFDEPFVLSADRGGCTVEDFCNQVHRTLVKDMKYALVWGTSARHYPQHCGLFHHLEDEDVVQIVKKKVREEGGRGRFKSHSNAPARIADREKKAPLKQ</sequence>
<keyword id="KW-0025">Alternative splicing</keyword>
<keyword id="KW-0963">Cytoplasm</keyword>
<keyword id="KW-0342">GTP-binding</keyword>
<keyword id="KW-0547">Nucleotide-binding</keyword>
<keyword id="KW-1185">Reference proteome</keyword>
<accession>Q9CAI1</accession>
<accession>C0Z340</accession>
<accession>Q56Z00</accession>
<protein>
    <recommendedName>
        <fullName>Developmentally-regulated G-protein 2</fullName>
        <shortName>AtDRG2</shortName>
    </recommendedName>
    <alternativeName>
        <fullName>Developmentally-regulated G-protein 2B</fullName>
        <shortName>AtDRG2b</shortName>
    </alternativeName>
</protein>
<comment type="function">
    <text evidence="5">Binds GDP and GTP, and has low GTPase activity.</text>
</comment>
<comment type="subcellular location">
    <subcellularLocation>
        <location evidence="1">Cytoplasm</location>
    </subcellularLocation>
</comment>
<comment type="alternative products">
    <event type="alternative splicing"/>
    <isoform>
        <id>Q9CAI1-1</id>
        <name>1</name>
        <sequence type="displayed"/>
    </isoform>
    <isoform>
        <id>Q9CAI1-2</id>
        <name>2</name>
        <sequence type="described" ref="VSP_041722"/>
    </isoform>
</comment>
<comment type="similarity">
    <text evidence="2">Belongs to the TRAFAC class OBG-HflX-like GTPase superfamily. OBG GTPase family.</text>
</comment>
<comment type="caution">
    <text evidence="7">The nomenclature of the 3 Arabidopsis DRG genes is ambiguous; in the literature several gene names have been used for the same protein.</text>
</comment>